<comment type="function">
    <text evidence="1">This regulatory protein, when combined with SAM (S-adenosylmethionine) represses the expression of the methionine regulon and of enzymes involved in SAM synthesis.</text>
</comment>
<comment type="subunit">
    <text evidence="1">Homodimer.</text>
</comment>
<comment type="subcellular location">
    <subcellularLocation>
        <location evidence="1">Cytoplasm</location>
    </subcellularLocation>
</comment>
<comment type="domain">
    <text>Does not bind DNA by a helix-turn-helix motif.</text>
</comment>
<comment type="similarity">
    <text evidence="1">Belongs to the MetJ family.</text>
</comment>
<protein>
    <recommendedName>
        <fullName evidence="1">Met repressor</fullName>
    </recommendedName>
    <alternativeName>
        <fullName evidence="1">Met regulon regulatory protein MetJ</fullName>
    </alternativeName>
</protein>
<gene>
    <name evidence="1" type="primary">metJ</name>
    <name type="ordered locus">APP7_2006</name>
</gene>
<accession>B3H2Y8</accession>
<evidence type="ECO:0000255" key="1">
    <source>
        <dbReference type="HAMAP-Rule" id="MF_00744"/>
    </source>
</evidence>
<feature type="chain" id="PRO_1000191207" description="Met repressor">
    <location>
        <begin position="1"/>
        <end position="105"/>
    </location>
</feature>
<proteinExistence type="inferred from homology"/>
<reference key="1">
    <citation type="submission" date="2008-06" db="EMBL/GenBank/DDBJ databases">
        <title>Genome and proteome analysis of A. pleuropneumoniae serotype 7.</title>
        <authorList>
            <person name="Linke B."/>
            <person name="Buettner F."/>
            <person name="Martinez-Arias R."/>
            <person name="Goesmann A."/>
            <person name="Baltes N."/>
            <person name="Tegetmeyer H."/>
            <person name="Singh M."/>
            <person name="Gerlach G.F."/>
        </authorList>
    </citation>
    <scope>NUCLEOTIDE SEQUENCE [LARGE SCALE GENOMIC DNA]</scope>
    <source>
        <strain>AP76</strain>
    </source>
</reference>
<name>METJ_ACTP7</name>
<sequence>MADWSGEYISPYAEHGKKSEQVKKITVSIPIKVLEILTNERTRRQIKNLRHATNSELLCEAFLHAFTGQPLPTDDDLMKERSDEIPEEAKAKMRELGIDPDNWQY</sequence>
<dbReference type="EMBL" id="CP001091">
    <property type="protein sequence ID" value="ACE62658.1"/>
    <property type="molecule type" value="Genomic_DNA"/>
</dbReference>
<dbReference type="RefSeq" id="WP_005599655.1">
    <property type="nucleotide sequence ID" value="NC_010939.1"/>
</dbReference>
<dbReference type="SMR" id="B3H2Y8"/>
<dbReference type="GeneID" id="48600222"/>
<dbReference type="KEGG" id="apa:APP7_2006"/>
<dbReference type="HOGENOM" id="CLU_142318_0_0_6"/>
<dbReference type="Proteomes" id="UP000001226">
    <property type="component" value="Chromosome"/>
</dbReference>
<dbReference type="GO" id="GO:0005737">
    <property type="term" value="C:cytoplasm"/>
    <property type="evidence" value="ECO:0007669"/>
    <property type="project" value="UniProtKB-SubCell"/>
</dbReference>
<dbReference type="GO" id="GO:0003677">
    <property type="term" value="F:DNA binding"/>
    <property type="evidence" value="ECO:0007669"/>
    <property type="project" value="UniProtKB-KW"/>
</dbReference>
<dbReference type="GO" id="GO:0003700">
    <property type="term" value="F:DNA-binding transcription factor activity"/>
    <property type="evidence" value="ECO:0007669"/>
    <property type="project" value="InterPro"/>
</dbReference>
<dbReference type="GO" id="GO:0009086">
    <property type="term" value="P:methionine biosynthetic process"/>
    <property type="evidence" value="ECO:0007669"/>
    <property type="project" value="UniProtKB-UniRule"/>
</dbReference>
<dbReference type="GO" id="GO:0045892">
    <property type="term" value="P:negative regulation of DNA-templated transcription"/>
    <property type="evidence" value="ECO:0007669"/>
    <property type="project" value="UniProtKB-UniRule"/>
</dbReference>
<dbReference type="Gene3D" id="1.10.140.10">
    <property type="entry name" value="MET Apo-Repressor, subunit A"/>
    <property type="match status" value="1"/>
</dbReference>
<dbReference type="HAMAP" id="MF_00744">
    <property type="entry name" value="MetJ"/>
    <property type="match status" value="1"/>
</dbReference>
<dbReference type="InterPro" id="IPR002084">
    <property type="entry name" value="Met_repressor_MetJ"/>
</dbReference>
<dbReference type="InterPro" id="IPR023453">
    <property type="entry name" value="Met_repressor_MetJ_dom_sf"/>
</dbReference>
<dbReference type="InterPro" id="IPR010985">
    <property type="entry name" value="Ribbon_hlx_hlx"/>
</dbReference>
<dbReference type="NCBIfam" id="NF003622">
    <property type="entry name" value="PRK05264.1"/>
    <property type="match status" value="1"/>
</dbReference>
<dbReference type="Pfam" id="PF01340">
    <property type="entry name" value="MetJ"/>
    <property type="match status" value="1"/>
</dbReference>
<dbReference type="SUPFAM" id="SSF47598">
    <property type="entry name" value="Ribbon-helix-helix"/>
    <property type="match status" value="1"/>
</dbReference>
<keyword id="KW-0028">Amino-acid biosynthesis</keyword>
<keyword id="KW-0963">Cytoplasm</keyword>
<keyword id="KW-0238">DNA-binding</keyword>
<keyword id="KW-0486">Methionine biosynthesis</keyword>
<keyword id="KW-0678">Repressor</keyword>
<keyword id="KW-0804">Transcription</keyword>
<keyword id="KW-0805">Transcription regulation</keyword>
<organism>
    <name type="scientific">Actinobacillus pleuropneumoniae serotype 7 (strain AP76)</name>
    <dbReference type="NCBI Taxonomy" id="537457"/>
    <lineage>
        <taxon>Bacteria</taxon>
        <taxon>Pseudomonadati</taxon>
        <taxon>Pseudomonadota</taxon>
        <taxon>Gammaproteobacteria</taxon>
        <taxon>Pasteurellales</taxon>
        <taxon>Pasteurellaceae</taxon>
        <taxon>Actinobacillus</taxon>
    </lineage>
</organism>